<accession>Q82ZT8</accession>
<gene>
    <name type="primary">rbsU</name>
    <name type="ordered locus">EF_2959</name>
</gene>
<proteinExistence type="inferred from homology"/>
<feature type="chain" id="PRO_0000213633" description="Putative ribose uptake protein RbsU">
    <location>
        <begin position="1"/>
        <end position="295"/>
    </location>
</feature>
<feature type="transmembrane region" description="Helical" evidence="2">
    <location>
        <begin position="5"/>
        <end position="24"/>
    </location>
</feature>
<feature type="transmembrane region" description="Helical" evidence="2">
    <location>
        <begin position="34"/>
        <end position="56"/>
    </location>
</feature>
<feature type="transmembrane region" description="Helical" evidence="2">
    <location>
        <begin position="63"/>
        <end position="80"/>
    </location>
</feature>
<feature type="transmembrane region" description="Helical" evidence="2">
    <location>
        <begin position="95"/>
        <end position="114"/>
    </location>
</feature>
<feature type="transmembrane region" description="Helical" evidence="2">
    <location>
        <begin position="121"/>
        <end position="139"/>
    </location>
</feature>
<feature type="transmembrane region" description="Helical" evidence="2">
    <location>
        <begin position="154"/>
        <end position="171"/>
    </location>
</feature>
<feature type="transmembrane region" description="Helical" evidence="2">
    <location>
        <begin position="183"/>
        <end position="205"/>
    </location>
</feature>
<feature type="transmembrane region" description="Helical" evidence="2">
    <location>
        <begin position="220"/>
        <end position="237"/>
    </location>
</feature>
<feature type="transmembrane region" description="Helical" evidence="2">
    <location>
        <begin position="244"/>
        <end position="266"/>
    </location>
</feature>
<feature type="transmembrane region" description="Helical" evidence="2">
    <location>
        <begin position="276"/>
        <end position="293"/>
    </location>
</feature>
<organism>
    <name type="scientific">Enterococcus faecalis (strain ATCC 700802 / V583)</name>
    <dbReference type="NCBI Taxonomy" id="226185"/>
    <lineage>
        <taxon>Bacteria</taxon>
        <taxon>Bacillati</taxon>
        <taxon>Bacillota</taxon>
        <taxon>Bacilli</taxon>
        <taxon>Lactobacillales</taxon>
        <taxon>Enterococcaceae</taxon>
        <taxon>Enterococcus</taxon>
    </lineage>
</organism>
<reference key="1">
    <citation type="journal article" date="2003" name="Science">
        <title>Role of mobile DNA in the evolution of vancomycin-resistant Enterococcus faecalis.</title>
        <authorList>
            <person name="Paulsen I.T."/>
            <person name="Banerjei L."/>
            <person name="Myers G.S.A."/>
            <person name="Nelson K.E."/>
            <person name="Seshadri R."/>
            <person name="Read T.D."/>
            <person name="Fouts D.E."/>
            <person name="Eisen J.A."/>
            <person name="Gill S.R."/>
            <person name="Heidelberg J.F."/>
            <person name="Tettelin H."/>
            <person name="Dodson R.J."/>
            <person name="Umayam L.A."/>
            <person name="Brinkac L.M."/>
            <person name="Beanan M.J."/>
            <person name="Daugherty S.C."/>
            <person name="DeBoy R.T."/>
            <person name="Durkin S.A."/>
            <person name="Kolonay J.F."/>
            <person name="Madupu R."/>
            <person name="Nelson W.C."/>
            <person name="Vamathevan J.J."/>
            <person name="Tran B."/>
            <person name="Upton J."/>
            <person name="Hansen T."/>
            <person name="Shetty J."/>
            <person name="Khouri H.M."/>
            <person name="Utterback T.R."/>
            <person name="Radune D."/>
            <person name="Ketchum K.A."/>
            <person name="Dougherty B.A."/>
            <person name="Fraser C.M."/>
        </authorList>
    </citation>
    <scope>NUCLEOTIDE SEQUENCE [LARGE SCALE GENOMIC DNA]</scope>
    <source>
        <strain>ATCC 700802 / V583</strain>
    </source>
</reference>
<comment type="function">
    <text evidence="1">Could be involved in the uptake of ribose.</text>
</comment>
<comment type="subcellular location">
    <subcellularLocation>
        <location evidence="3">Cell membrane</location>
        <topology evidence="3">Multi-pass membrane protein</topology>
    </subcellularLocation>
</comment>
<comment type="similarity">
    <text evidence="3">Belongs to the GRP transporter (TC 2.A.7.5) family.</text>
</comment>
<dbReference type="EMBL" id="AE016830">
    <property type="protein sequence ID" value="AAO82647.1"/>
    <property type="molecule type" value="Genomic_DNA"/>
</dbReference>
<dbReference type="RefSeq" id="NP_816577.1">
    <property type="nucleotide sequence ID" value="NC_004668.1"/>
</dbReference>
<dbReference type="RefSeq" id="WP_002378904.1">
    <property type="nucleotide sequence ID" value="NZ_KE136524.1"/>
</dbReference>
<dbReference type="SMR" id="Q82ZT8"/>
<dbReference type="STRING" id="226185.EF_2959"/>
<dbReference type="EnsemblBacteria" id="AAO82647">
    <property type="protein sequence ID" value="AAO82647"/>
    <property type="gene ID" value="EF_2959"/>
</dbReference>
<dbReference type="KEGG" id="efa:EF2959"/>
<dbReference type="PATRIC" id="fig|226185.45.peg.613"/>
<dbReference type="eggNOG" id="COG4975">
    <property type="taxonomic scope" value="Bacteria"/>
</dbReference>
<dbReference type="HOGENOM" id="CLU_076024_0_1_9"/>
<dbReference type="Proteomes" id="UP000001415">
    <property type="component" value="Chromosome"/>
</dbReference>
<dbReference type="GO" id="GO:0005886">
    <property type="term" value="C:plasma membrane"/>
    <property type="evidence" value="ECO:0007669"/>
    <property type="project" value="UniProtKB-SubCell"/>
</dbReference>
<dbReference type="GO" id="GO:0015144">
    <property type="term" value="F:carbohydrate transmembrane transporter activity"/>
    <property type="evidence" value="ECO:0007669"/>
    <property type="project" value="InterPro"/>
</dbReference>
<dbReference type="CDD" id="cd23111">
    <property type="entry name" value="ribose_uptake_RbsU"/>
    <property type="match status" value="1"/>
</dbReference>
<dbReference type="InterPro" id="IPR010651">
    <property type="entry name" value="Sugar_transport"/>
</dbReference>
<dbReference type="NCBIfam" id="NF047342">
    <property type="entry name" value="symport_RbsU"/>
    <property type="match status" value="1"/>
</dbReference>
<dbReference type="PANTHER" id="PTHR16119">
    <property type="entry name" value="TRANSMEMBRANE PROTEIN 144"/>
    <property type="match status" value="1"/>
</dbReference>
<dbReference type="PANTHER" id="PTHR16119:SF17">
    <property type="entry name" value="TRANSMEMBRANE PROTEIN 144"/>
    <property type="match status" value="1"/>
</dbReference>
<dbReference type="Pfam" id="PF06800">
    <property type="entry name" value="Sugar_transport"/>
    <property type="match status" value="1"/>
</dbReference>
<dbReference type="SUPFAM" id="SSF103481">
    <property type="entry name" value="Multidrug resistance efflux transporter EmrE"/>
    <property type="match status" value="1"/>
</dbReference>
<name>RBSU_ENTFA</name>
<sequence length="295" mass="30902">MNATALLIGLGPLLGWGLFPTIASKIGGRPVNQILGTSLGTLIFAAIFSMINGLAFPAGMDLFFSILSGVGWACAQIITFKCFTMIGSSRAMPVTTAFQLLGASLWGVFFLGNWPGATAKLLGAFALVLIMIGAKMTVWSETESAESAGIMKKAVLLLAVGEIGYWAYSAAPQATAIDGMHAFLPQAIGMVIVAVIYSAVVTIKGGEISPFIEAVSYKQIFSGFFFAFAALTYLISAQPDMNGLATGFILSQTSVVLATLTGIWFLGQKKTAKEMTVTIIGLVLILAAATITVMI</sequence>
<evidence type="ECO:0000250" key="1"/>
<evidence type="ECO:0000255" key="2"/>
<evidence type="ECO:0000305" key="3"/>
<keyword id="KW-1003">Cell membrane</keyword>
<keyword id="KW-0472">Membrane</keyword>
<keyword id="KW-1185">Reference proteome</keyword>
<keyword id="KW-0762">Sugar transport</keyword>
<keyword id="KW-0812">Transmembrane</keyword>
<keyword id="KW-1133">Transmembrane helix</keyword>
<keyword id="KW-0813">Transport</keyword>
<protein>
    <recommendedName>
        <fullName>Putative ribose uptake protein RbsU</fullName>
    </recommendedName>
</protein>